<comment type="function">
    <text evidence="2">May be involved in cell growth. Probably acts as a terminal oxidase of plasma electron transport from cytosolic NAD(P)H via hydroquinones to acceptors at the cell surface. Hydroquinone oxidase activity alternates with a protein disulfide-thiol interchange/oxidoreductase activity which may control physical membrane displacements associated with vesicle budding or cell enlargement. The activities oscillate with a period length of 22 minutes and play a role in control of the ultradian cellular biological clock (By similarity).</text>
</comment>
<comment type="cofactor">
    <cofactor evidence="2">
        <name>Cu cation</name>
        <dbReference type="ChEBI" id="CHEBI:23378"/>
    </cofactor>
</comment>
<comment type="activity regulation">
    <text evidence="2">Inhibited by the antitumor sulfonylurea LY181984, the vabilloid capsaicin, and retinoids.</text>
</comment>
<comment type="subcellular location">
    <subcellularLocation>
        <location evidence="1">Cell membrane</location>
    </subcellularLocation>
    <subcellularLocation>
        <location evidence="1">Secreted</location>
        <location evidence="1">Extracellular space</location>
    </subcellularLocation>
    <text evidence="1">Extracellular and plasma membrane-associated.</text>
</comment>
<comment type="alternative products">
    <event type="alternative splicing"/>
    <isoform>
        <id>Q8R0Z2-1</id>
        <name evidence="7">1</name>
        <sequence type="displayed"/>
    </isoform>
    <isoform>
        <id>Q8R0Z2-2</id>
        <name evidence="7">2</name>
        <sequence type="described" ref="VSP_051830"/>
    </isoform>
    <isoform>
        <id>Q8R0Z2-3</id>
        <name evidence="7">3</name>
        <sequence type="described" ref="VSP_051831"/>
    </isoform>
</comment>
<comment type="PTM">
    <text evidence="2">Glycosylated.</text>
</comment>
<comment type="similarity">
    <text evidence="7">Belongs to the ENOX family.</text>
</comment>
<reference key="1">
    <citation type="journal article" date="2005" name="Science">
        <title>The transcriptional landscape of the mammalian genome.</title>
        <authorList>
            <person name="Carninci P."/>
            <person name="Kasukawa T."/>
            <person name="Katayama S."/>
            <person name="Gough J."/>
            <person name="Frith M.C."/>
            <person name="Maeda N."/>
            <person name="Oyama R."/>
            <person name="Ravasi T."/>
            <person name="Lenhard B."/>
            <person name="Wells C."/>
            <person name="Kodzius R."/>
            <person name="Shimokawa K."/>
            <person name="Bajic V.B."/>
            <person name="Brenner S.E."/>
            <person name="Batalov S."/>
            <person name="Forrest A.R."/>
            <person name="Zavolan M."/>
            <person name="Davis M.J."/>
            <person name="Wilming L.G."/>
            <person name="Aidinis V."/>
            <person name="Allen J.E."/>
            <person name="Ambesi-Impiombato A."/>
            <person name="Apweiler R."/>
            <person name="Aturaliya R.N."/>
            <person name="Bailey T.L."/>
            <person name="Bansal M."/>
            <person name="Baxter L."/>
            <person name="Beisel K.W."/>
            <person name="Bersano T."/>
            <person name="Bono H."/>
            <person name="Chalk A.M."/>
            <person name="Chiu K.P."/>
            <person name="Choudhary V."/>
            <person name="Christoffels A."/>
            <person name="Clutterbuck D.R."/>
            <person name="Crowe M.L."/>
            <person name="Dalla E."/>
            <person name="Dalrymple B.P."/>
            <person name="de Bono B."/>
            <person name="Della Gatta G."/>
            <person name="di Bernardo D."/>
            <person name="Down T."/>
            <person name="Engstrom P."/>
            <person name="Fagiolini M."/>
            <person name="Faulkner G."/>
            <person name="Fletcher C.F."/>
            <person name="Fukushima T."/>
            <person name="Furuno M."/>
            <person name="Futaki S."/>
            <person name="Gariboldi M."/>
            <person name="Georgii-Hemming P."/>
            <person name="Gingeras T.R."/>
            <person name="Gojobori T."/>
            <person name="Green R.E."/>
            <person name="Gustincich S."/>
            <person name="Harbers M."/>
            <person name="Hayashi Y."/>
            <person name="Hensch T.K."/>
            <person name="Hirokawa N."/>
            <person name="Hill D."/>
            <person name="Huminiecki L."/>
            <person name="Iacono M."/>
            <person name="Ikeo K."/>
            <person name="Iwama A."/>
            <person name="Ishikawa T."/>
            <person name="Jakt M."/>
            <person name="Kanapin A."/>
            <person name="Katoh M."/>
            <person name="Kawasawa Y."/>
            <person name="Kelso J."/>
            <person name="Kitamura H."/>
            <person name="Kitano H."/>
            <person name="Kollias G."/>
            <person name="Krishnan S.P."/>
            <person name="Kruger A."/>
            <person name="Kummerfeld S.K."/>
            <person name="Kurochkin I.V."/>
            <person name="Lareau L.F."/>
            <person name="Lazarevic D."/>
            <person name="Lipovich L."/>
            <person name="Liu J."/>
            <person name="Liuni S."/>
            <person name="McWilliam S."/>
            <person name="Madan Babu M."/>
            <person name="Madera M."/>
            <person name="Marchionni L."/>
            <person name="Matsuda H."/>
            <person name="Matsuzawa S."/>
            <person name="Miki H."/>
            <person name="Mignone F."/>
            <person name="Miyake S."/>
            <person name="Morris K."/>
            <person name="Mottagui-Tabar S."/>
            <person name="Mulder N."/>
            <person name="Nakano N."/>
            <person name="Nakauchi H."/>
            <person name="Ng P."/>
            <person name="Nilsson R."/>
            <person name="Nishiguchi S."/>
            <person name="Nishikawa S."/>
            <person name="Nori F."/>
            <person name="Ohara O."/>
            <person name="Okazaki Y."/>
            <person name="Orlando V."/>
            <person name="Pang K.C."/>
            <person name="Pavan W.J."/>
            <person name="Pavesi G."/>
            <person name="Pesole G."/>
            <person name="Petrovsky N."/>
            <person name="Piazza S."/>
            <person name="Reed J."/>
            <person name="Reid J.F."/>
            <person name="Ring B.Z."/>
            <person name="Ringwald M."/>
            <person name="Rost B."/>
            <person name="Ruan Y."/>
            <person name="Salzberg S.L."/>
            <person name="Sandelin A."/>
            <person name="Schneider C."/>
            <person name="Schoenbach C."/>
            <person name="Sekiguchi K."/>
            <person name="Semple C.A."/>
            <person name="Seno S."/>
            <person name="Sessa L."/>
            <person name="Sheng Y."/>
            <person name="Shibata Y."/>
            <person name="Shimada H."/>
            <person name="Shimada K."/>
            <person name="Silva D."/>
            <person name="Sinclair B."/>
            <person name="Sperling S."/>
            <person name="Stupka E."/>
            <person name="Sugiura K."/>
            <person name="Sultana R."/>
            <person name="Takenaka Y."/>
            <person name="Taki K."/>
            <person name="Tammoja K."/>
            <person name="Tan S.L."/>
            <person name="Tang S."/>
            <person name="Taylor M.S."/>
            <person name="Tegner J."/>
            <person name="Teichmann S.A."/>
            <person name="Ueda H.R."/>
            <person name="van Nimwegen E."/>
            <person name="Verardo R."/>
            <person name="Wei C.L."/>
            <person name="Yagi K."/>
            <person name="Yamanishi H."/>
            <person name="Zabarovsky E."/>
            <person name="Zhu S."/>
            <person name="Zimmer A."/>
            <person name="Hide W."/>
            <person name="Bult C."/>
            <person name="Grimmond S.M."/>
            <person name="Teasdale R.D."/>
            <person name="Liu E.T."/>
            <person name="Brusic V."/>
            <person name="Quackenbush J."/>
            <person name="Wahlestedt C."/>
            <person name="Mattick J.S."/>
            <person name="Hume D.A."/>
            <person name="Kai C."/>
            <person name="Sasaki D."/>
            <person name="Tomaru Y."/>
            <person name="Fukuda S."/>
            <person name="Kanamori-Katayama M."/>
            <person name="Suzuki M."/>
            <person name="Aoki J."/>
            <person name="Arakawa T."/>
            <person name="Iida J."/>
            <person name="Imamura K."/>
            <person name="Itoh M."/>
            <person name="Kato T."/>
            <person name="Kawaji H."/>
            <person name="Kawagashira N."/>
            <person name="Kawashima T."/>
            <person name="Kojima M."/>
            <person name="Kondo S."/>
            <person name="Konno H."/>
            <person name="Nakano K."/>
            <person name="Ninomiya N."/>
            <person name="Nishio T."/>
            <person name="Okada M."/>
            <person name="Plessy C."/>
            <person name="Shibata K."/>
            <person name="Shiraki T."/>
            <person name="Suzuki S."/>
            <person name="Tagami M."/>
            <person name="Waki K."/>
            <person name="Watahiki A."/>
            <person name="Okamura-Oho Y."/>
            <person name="Suzuki H."/>
            <person name="Kawai J."/>
            <person name="Hayashizaki Y."/>
        </authorList>
    </citation>
    <scope>NUCLEOTIDE SEQUENCE [LARGE SCALE MRNA] (ISOFORMS 1 AND 2)</scope>
    <source>
        <strain>C57BL/6J</strain>
        <tissue>Diencephalon</tissue>
        <tissue>Thymus</tissue>
    </source>
</reference>
<reference key="2">
    <citation type="journal article" date="2009" name="PLoS Biol.">
        <title>Lineage-specific biology revealed by a finished genome assembly of the mouse.</title>
        <authorList>
            <person name="Church D.M."/>
            <person name="Goodstadt L."/>
            <person name="Hillier L.W."/>
            <person name="Zody M.C."/>
            <person name="Goldstein S."/>
            <person name="She X."/>
            <person name="Bult C.J."/>
            <person name="Agarwala R."/>
            <person name="Cherry J.L."/>
            <person name="DiCuccio M."/>
            <person name="Hlavina W."/>
            <person name="Kapustin Y."/>
            <person name="Meric P."/>
            <person name="Maglott D."/>
            <person name="Birtle Z."/>
            <person name="Marques A.C."/>
            <person name="Graves T."/>
            <person name="Zhou S."/>
            <person name="Teague B."/>
            <person name="Potamousis K."/>
            <person name="Churas C."/>
            <person name="Place M."/>
            <person name="Herschleb J."/>
            <person name="Runnheim R."/>
            <person name="Forrest D."/>
            <person name="Amos-Landgraf J."/>
            <person name="Schwartz D.C."/>
            <person name="Cheng Z."/>
            <person name="Lindblad-Toh K."/>
            <person name="Eichler E.E."/>
            <person name="Ponting C.P."/>
        </authorList>
    </citation>
    <scope>NUCLEOTIDE SEQUENCE [LARGE SCALE GENOMIC DNA]</scope>
    <source>
        <strain>C57BL/6J</strain>
    </source>
</reference>
<reference evidence="7 8" key="3">
    <citation type="journal article" date="2004" name="Genome Res.">
        <title>The status, quality, and expansion of the NIH full-length cDNA project: the Mammalian Gene Collection (MGC).</title>
        <authorList>
            <consortium name="The MGC Project Team"/>
        </authorList>
    </citation>
    <scope>NUCLEOTIDE SEQUENCE [LARGE SCALE MRNA] (ISOFORM 1)</scope>
    <scope>NUCLEOTIDE SEQUENCE [LARGE SCALE MRNA] OF 328-598 (ISOFORM 3)</scope>
    <source>
        <strain evidence="8">FVB/N</strain>
        <tissue evidence="8">Kidney</tissue>
        <tissue evidence="9">Mammary gland</tissue>
    </source>
</reference>
<keyword id="KW-0025">Alternative splicing</keyword>
<keyword id="KW-0090">Biological rhythms</keyword>
<keyword id="KW-1003">Cell membrane</keyword>
<keyword id="KW-0175">Coiled coil</keyword>
<keyword id="KW-0186">Copper</keyword>
<keyword id="KW-0249">Electron transport</keyword>
<keyword id="KW-0325">Glycoprotein</keyword>
<keyword id="KW-0341">Growth regulation</keyword>
<keyword id="KW-0472">Membrane</keyword>
<keyword id="KW-0520">NAD</keyword>
<keyword id="KW-0560">Oxidoreductase</keyword>
<keyword id="KW-1185">Reference proteome</keyword>
<keyword id="KW-0964">Secreted</keyword>
<keyword id="KW-0813">Transport</keyword>
<sequence length="598" mass="68285">MTLPVSDPAAWATAMNNLGMAPLGIAGQPILPDFDPALGMMTGIPPITPMMPGLGIVPPPIPPDMPVAKEIIHCKSCTLFPPNPNLPPPATRERPPGCKTVFVGGLPENGTEQIIVEVFEQCGEIIAIRKSKKNFCHIRFAEEYMVDKALYLSGYRIRLGSSTDKKDTGRLHVDFAQARDDLYEWECKQRMLAREERHRRRMEEERMRPPSPPPVVHYSDHECSIVAEKLKDDSKFSEAVQTLLTWIERGEVNRRSANHFYSMIQSANSHVRRLVNEKATHEKEMEEAKEKFKQALSGILIQFEQIVAVYHSASKQKAWDHFTKAQRKNISVWCKQAEEIRNIHNDELMGIRREEEMEMSDDEIEETTETKETEESALVSQAEALKEENDSLRWQLDAYRNEVELLKQEQGKAHREDDPNKEQQLKLLQQALQGMQQHLLKVQEEYKKKEAELDRIKDDNLQVEQLLENFHEKQENCGSRLCASSQEGEQPLEKTAVSNPVKSEREALLVGIISTFLHVHPFGASIEYICSYLNRLDNKASYQIPSKLTTSPLLPISTSDVESLMSRLQHTFRQEMTGVGASLEKRWKFCGFEGLKLT</sequence>
<name>ENOX2_MOUSE</name>
<dbReference type="EC" id="1.-.-.-"/>
<dbReference type="EMBL" id="AK034058">
    <property type="protein sequence ID" value="BAC28565.1"/>
    <property type="molecule type" value="mRNA"/>
</dbReference>
<dbReference type="EMBL" id="AK041822">
    <property type="protein sequence ID" value="BAC31077.1"/>
    <property type="molecule type" value="mRNA"/>
</dbReference>
<dbReference type="EMBL" id="BX294194">
    <property type="status" value="NOT_ANNOTATED_CDS"/>
    <property type="molecule type" value="Genomic_DNA"/>
</dbReference>
<dbReference type="EMBL" id="BC025915">
    <property type="protein sequence ID" value="AAH25915.1"/>
    <property type="molecule type" value="mRNA"/>
</dbReference>
<dbReference type="EMBL" id="BC026450">
    <property type="protein sequence ID" value="AAH26450.1"/>
    <property type="molecule type" value="mRNA"/>
</dbReference>
<dbReference type="CCDS" id="CCDS30115.1">
    <molecule id="Q8R0Z2-1"/>
</dbReference>
<dbReference type="CCDS" id="CCDS72377.1">
    <molecule id="Q8R0Z2-3"/>
</dbReference>
<dbReference type="CCDS" id="CCDS72378.1">
    <molecule id="Q8R0Z2-2"/>
</dbReference>
<dbReference type="RefSeq" id="NP_001258376.1">
    <molecule id="Q8R0Z2-1"/>
    <property type="nucleotide sequence ID" value="NM_001271447.1"/>
</dbReference>
<dbReference type="RefSeq" id="NP_001258377.1">
    <molecule id="Q8R0Z2-1"/>
    <property type="nucleotide sequence ID" value="NM_001271448.1"/>
</dbReference>
<dbReference type="RefSeq" id="NP_001258378.1">
    <molecule id="Q8R0Z2-1"/>
    <property type="nucleotide sequence ID" value="NM_001271449.1"/>
</dbReference>
<dbReference type="RefSeq" id="NP_001258379.1">
    <molecule id="Q8R0Z2-2"/>
    <property type="nucleotide sequence ID" value="NM_001271450.1"/>
</dbReference>
<dbReference type="RefSeq" id="NP_001258380.1">
    <molecule id="Q8R0Z2-3"/>
    <property type="nucleotide sequence ID" value="NM_001271451.1"/>
</dbReference>
<dbReference type="RefSeq" id="NP_666063.1">
    <molecule id="Q8R0Z2-1"/>
    <property type="nucleotide sequence ID" value="NM_145951.5"/>
</dbReference>
<dbReference type="RefSeq" id="XP_011249302.2">
    <molecule id="Q8R0Z2-1"/>
    <property type="nucleotide sequence ID" value="XM_011251000.4"/>
</dbReference>
<dbReference type="RefSeq" id="XP_036017783.1">
    <molecule id="Q8R0Z2-1"/>
    <property type="nucleotide sequence ID" value="XM_036161890.1"/>
</dbReference>
<dbReference type="RefSeq" id="XP_036017784.1">
    <molecule id="Q8R0Z2-1"/>
    <property type="nucleotide sequence ID" value="XM_036161891.1"/>
</dbReference>
<dbReference type="RefSeq" id="XP_036017787.1">
    <molecule id="Q8R0Z2-3"/>
    <property type="nucleotide sequence ID" value="XM_036161894.1"/>
</dbReference>
<dbReference type="SMR" id="Q8R0Z2"/>
<dbReference type="FunCoup" id="Q8R0Z2">
    <property type="interactions" value="1427"/>
</dbReference>
<dbReference type="STRING" id="10090.ENSMUSP00000110564"/>
<dbReference type="iPTMnet" id="Q8R0Z2"/>
<dbReference type="PhosphoSitePlus" id="Q8R0Z2"/>
<dbReference type="PaxDb" id="10090-ENSMUSP00000110568"/>
<dbReference type="ProteomicsDB" id="275865">
    <molecule id="Q8R0Z2-1"/>
</dbReference>
<dbReference type="ProteomicsDB" id="275866">
    <molecule id="Q8R0Z2-2"/>
</dbReference>
<dbReference type="ProteomicsDB" id="275867">
    <molecule id="Q8R0Z2-3"/>
</dbReference>
<dbReference type="Antibodypedia" id="354">
    <property type="antibodies" value="196 antibodies from 29 providers"/>
</dbReference>
<dbReference type="DNASU" id="209224"/>
<dbReference type="Ensembl" id="ENSMUST00000033437.15">
    <molecule id="Q8R0Z2-1"/>
    <property type="protein sequence ID" value="ENSMUSP00000033437.9"/>
    <property type="gene ID" value="ENSMUSG00000031109.18"/>
</dbReference>
<dbReference type="Ensembl" id="ENSMUST00000114911.8">
    <molecule id="Q8R0Z2-2"/>
    <property type="protein sequence ID" value="ENSMUSP00000110561.2"/>
    <property type="gene ID" value="ENSMUSG00000031109.18"/>
</dbReference>
<dbReference type="Ensembl" id="ENSMUST00000114912.8">
    <molecule id="Q8R0Z2-3"/>
    <property type="protein sequence ID" value="ENSMUSP00000110562.2"/>
    <property type="gene ID" value="ENSMUSG00000031109.18"/>
</dbReference>
<dbReference type="Ensembl" id="ENSMUST00000114914.8">
    <molecule id="Q8R0Z2-1"/>
    <property type="protein sequence ID" value="ENSMUSP00000110564.2"/>
    <property type="gene ID" value="ENSMUSG00000031109.18"/>
</dbReference>
<dbReference type="Ensembl" id="ENSMUST00000114918.9">
    <molecule id="Q8R0Z2-1"/>
    <property type="protein sequence ID" value="ENSMUSP00000110568.3"/>
    <property type="gene ID" value="ENSMUSG00000031109.18"/>
</dbReference>
<dbReference type="Ensembl" id="ENSMUST00000167659.8">
    <molecule id="Q8R0Z2-1"/>
    <property type="protein sequence ID" value="ENSMUSP00000128885.2"/>
    <property type="gene ID" value="ENSMUSG00000031109.18"/>
</dbReference>
<dbReference type="GeneID" id="209224"/>
<dbReference type="KEGG" id="mmu:209224"/>
<dbReference type="UCSC" id="uc009tcv.2">
    <molecule id="Q8R0Z2-1"/>
    <property type="organism name" value="mouse"/>
</dbReference>
<dbReference type="UCSC" id="uc009tcz.2">
    <molecule id="Q8R0Z2-3"/>
    <property type="organism name" value="mouse"/>
</dbReference>
<dbReference type="UCSC" id="uc012hgt.2">
    <molecule id="Q8R0Z2-2"/>
    <property type="organism name" value="mouse"/>
</dbReference>
<dbReference type="AGR" id="MGI:2384799"/>
<dbReference type="CTD" id="10495"/>
<dbReference type="MGI" id="MGI:2384799">
    <property type="gene designation" value="Enox2"/>
</dbReference>
<dbReference type="VEuPathDB" id="HostDB:ENSMUSG00000031109"/>
<dbReference type="eggNOG" id="ENOG502QQ8G">
    <property type="taxonomic scope" value="Eukaryota"/>
</dbReference>
<dbReference type="GeneTree" id="ENSGT00390000006788"/>
<dbReference type="HOGENOM" id="CLU_019282_1_1_1"/>
<dbReference type="InParanoid" id="Q8R0Z2"/>
<dbReference type="OMA" id="FNVYRNH"/>
<dbReference type="OrthoDB" id="10039782at2759"/>
<dbReference type="PhylomeDB" id="Q8R0Z2"/>
<dbReference type="TreeFam" id="TF323802"/>
<dbReference type="BioGRID-ORCS" id="209224">
    <property type="hits" value="2 hits in 75 CRISPR screens"/>
</dbReference>
<dbReference type="ChiTaRS" id="Enox2">
    <property type="organism name" value="mouse"/>
</dbReference>
<dbReference type="PRO" id="PR:Q8R0Z2"/>
<dbReference type="Proteomes" id="UP000000589">
    <property type="component" value="Chromosome X"/>
</dbReference>
<dbReference type="RNAct" id="Q8R0Z2">
    <property type="molecule type" value="protein"/>
</dbReference>
<dbReference type="Bgee" id="ENSMUSG00000031109">
    <property type="expression patterns" value="Expressed in habenula and 253 other cell types or tissues"/>
</dbReference>
<dbReference type="GO" id="GO:0009897">
    <property type="term" value="C:external side of plasma membrane"/>
    <property type="evidence" value="ECO:0000250"/>
    <property type="project" value="UniProtKB"/>
</dbReference>
<dbReference type="GO" id="GO:0005576">
    <property type="term" value="C:extracellular region"/>
    <property type="evidence" value="ECO:0007669"/>
    <property type="project" value="UniProtKB-SubCell"/>
</dbReference>
<dbReference type="GO" id="GO:0016491">
    <property type="term" value="F:oxidoreductase activity"/>
    <property type="evidence" value="ECO:0007669"/>
    <property type="project" value="UniProtKB-KW"/>
</dbReference>
<dbReference type="GO" id="GO:0003723">
    <property type="term" value="F:RNA binding"/>
    <property type="evidence" value="ECO:0007669"/>
    <property type="project" value="InterPro"/>
</dbReference>
<dbReference type="GO" id="GO:0022900">
    <property type="term" value="P:electron transport chain"/>
    <property type="evidence" value="ECO:0000250"/>
    <property type="project" value="UniProtKB"/>
</dbReference>
<dbReference type="GO" id="GO:0007624">
    <property type="term" value="P:ultradian rhythm"/>
    <property type="evidence" value="ECO:0000250"/>
    <property type="project" value="UniProtKB"/>
</dbReference>
<dbReference type="CDD" id="cd12228">
    <property type="entry name" value="RRM_ENOX"/>
    <property type="match status" value="1"/>
</dbReference>
<dbReference type="FunFam" id="3.30.70.330:FF:000083">
    <property type="entry name" value="Putative ecto-NOX disulfide-thiol exchanger 1"/>
    <property type="match status" value="1"/>
</dbReference>
<dbReference type="Gene3D" id="3.30.70.330">
    <property type="match status" value="1"/>
</dbReference>
<dbReference type="InterPro" id="IPR038876">
    <property type="entry name" value="ENOX"/>
</dbReference>
<dbReference type="InterPro" id="IPR056611">
    <property type="entry name" value="ENOX1/2_dom"/>
</dbReference>
<dbReference type="InterPro" id="IPR034140">
    <property type="entry name" value="ENOX_RRM"/>
</dbReference>
<dbReference type="InterPro" id="IPR012677">
    <property type="entry name" value="Nucleotide-bd_a/b_plait_sf"/>
</dbReference>
<dbReference type="InterPro" id="IPR035979">
    <property type="entry name" value="RBD_domain_sf"/>
</dbReference>
<dbReference type="InterPro" id="IPR000504">
    <property type="entry name" value="RRM_dom"/>
</dbReference>
<dbReference type="PANTHER" id="PTHR16001">
    <property type="entry name" value="ECTO-NOX DISULFIDE-THIOL EXCHANGER"/>
    <property type="match status" value="1"/>
</dbReference>
<dbReference type="PANTHER" id="PTHR16001:SF7">
    <property type="entry name" value="ECTO-NOX DISULFIDE-THIOL EXCHANGER 2"/>
    <property type="match status" value="1"/>
</dbReference>
<dbReference type="Pfam" id="PF23267">
    <property type="entry name" value="ENOX1"/>
    <property type="match status" value="1"/>
</dbReference>
<dbReference type="Pfam" id="PF00076">
    <property type="entry name" value="RRM_1"/>
    <property type="match status" value="1"/>
</dbReference>
<dbReference type="SMART" id="SM00360">
    <property type="entry name" value="RRM"/>
    <property type="match status" value="1"/>
</dbReference>
<dbReference type="SUPFAM" id="SSF54928">
    <property type="entry name" value="RNA-binding domain, RBD"/>
    <property type="match status" value="1"/>
</dbReference>
<dbReference type="PROSITE" id="PS50102">
    <property type="entry name" value="RRM"/>
    <property type="match status" value="1"/>
</dbReference>
<accession>Q8R0Z2</accession>
<accession>B1B073</accession>
<accession>Q8BY59</accession>
<accession>Q8R372</accession>
<organism>
    <name type="scientific">Mus musculus</name>
    <name type="common">Mouse</name>
    <dbReference type="NCBI Taxonomy" id="10090"/>
    <lineage>
        <taxon>Eukaryota</taxon>
        <taxon>Metazoa</taxon>
        <taxon>Chordata</taxon>
        <taxon>Craniata</taxon>
        <taxon>Vertebrata</taxon>
        <taxon>Euteleostomi</taxon>
        <taxon>Mammalia</taxon>
        <taxon>Eutheria</taxon>
        <taxon>Euarchontoglires</taxon>
        <taxon>Glires</taxon>
        <taxon>Rodentia</taxon>
        <taxon>Myomorpha</taxon>
        <taxon>Muroidea</taxon>
        <taxon>Muridae</taxon>
        <taxon>Murinae</taxon>
        <taxon>Mus</taxon>
        <taxon>Mus</taxon>
    </lineage>
</organism>
<feature type="chain" id="PRO_0000079276" description="Ecto-NOX disulfide-thiol exchanger 2">
    <location>
        <begin position="1"/>
        <end position="598"/>
    </location>
</feature>
<feature type="domain" description="RRM" evidence="4">
    <location>
        <begin position="99"/>
        <end position="178"/>
    </location>
</feature>
<feature type="coiled-coil region" evidence="3">
    <location>
        <begin position="264"/>
        <end position="299"/>
    </location>
</feature>
<feature type="coiled-coil region" evidence="3">
    <location>
        <begin position="352"/>
        <end position="476"/>
    </location>
</feature>
<feature type="splice variant" id="VSP_051830" description="In isoform 2." evidence="6">
    <location>
        <begin position="463"/>
        <end position="473"/>
    </location>
</feature>
<feature type="splice variant" id="VSP_051831" description="In isoform 3." evidence="5">
    <location>
        <begin position="540"/>
        <end position="555"/>
    </location>
</feature>
<protein>
    <recommendedName>
        <fullName>Ecto-NOX disulfide-thiol exchanger 2</fullName>
    </recommendedName>
    <alternativeName>
        <fullName>APK1 antigen</fullName>
    </alternativeName>
    <alternativeName>
        <fullName>Cytosolic ovarian carcinoma antigen 1</fullName>
    </alternativeName>
    <alternativeName>
        <fullName>Tumor-associated hydroquinone oxidase</fullName>
        <shortName>tNOX</shortName>
    </alternativeName>
    <domain>
        <recommendedName>
            <fullName>Hydroquinone [NADH] oxidase</fullName>
            <ecNumber>1.-.-.-</ecNumber>
        </recommendedName>
    </domain>
    <domain>
        <recommendedName>
            <fullName>Protein disulfide-thiol oxidoreductase</fullName>
            <ecNumber>1.-.-.-</ecNumber>
        </recommendedName>
    </domain>
</protein>
<gene>
    <name type="primary">Enox2</name>
    <name type="synonym">Cova1</name>
</gene>
<evidence type="ECO:0000250" key="1"/>
<evidence type="ECO:0000250" key="2">
    <source>
        <dbReference type="UniProtKB" id="Q16206"/>
    </source>
</evidence>
<evidence type="ECO:0000255" key="3"/>
<evidence type="ECO:0000255" key="4">
    <source>
        <dbReference type="PROSITE-ProRule" id="PRU00176"/>
    </source>
</evidence>
<evidence type="ECO:0000303" key="5">
    <source>
    </source>
</evidence>
<evidence type="ECO:0000303" key="6">
    <source>
    </source>
</evidence>
<evidence type="ECO:0000305" key="7"/>
<evidence type="ECO:0000312" key="8">
    <source>
        <dbReference type="EMBL" id="AAH25915.1"/>
    </source>
</evidence>
<evidence type="ECO:0000312" key="9">
    <source>
        <dbReference type="EMBL" id="AAH26450.1"/>
    </source>
</evidence>
<proteinExistence type="evidence at transcript level"/>